<proteinExistence type="inferred from homology"/>
<gene>
    <name evidence="1" type="primary">pstB1</name>
    <name type="synonym">pstB</name>
    <name type="ordered locus">SPs1077</name>
</gene>
<accession>P0CZ37</accession>
<accession>P63376</accession>
<accession>Q8P0V4</accession>
<accession>Q99ZG5</accession>
<name>PSTB1_STRPQ</name>
<feature type="chain" id="PRO_0000411256" description="Phosphate import ATP-binding protein PstB 1">
    <location>
        <begin position="1"/>
        <end position="252"/>
    </location>
</feature>
<feature type="domain" description="ABC transporter" evidence="1">
    <location>
        <begin position="6"/>
        <end position="247"/>
    </location>
</feature>
<feature type="binding site" evidence="1">
    <location>
        <begin position="38"/>
        <end position="45"/>
    </location>
    <ligand>
        <name>ATP</name>
        <dbReference type="ChEBI" id="CHEBI:30616"/>
    </ligand>
</feature>
<dbReference type="EC" id="7.3.2.1" evidence="1"/>
<dbReference type="EMBL" id="BA000034">
    <property type="protein sequence ID" value="BAC64172.1"/>
    <property type="status" value="ALT_INIT"/>
    <property type="molecule type" value="Genomic_DNA"/>
</dbReference>
<dbReference type="RefSeq" id="WP_002993892.1">
    <property type="nucleotide sequence ID" value="NC_004606.1"/>
</dbReference>
<dbReference type="SMR" id="P0CZ37"/>
<dbReference type="GeneID" id="69900794"/>
<dbReference type="KEGG" id="sps:SPs1077"/>
<dbReference type="HOGENOM" id="CLU_000604_1_22_9"/>
<dbReference type="GO" id="GO:0005886">
    <property type="term" value="C:plasma membrane"/>
    <property type="evidence" value="ECO:0007669"/>
    <property type="project" value="UniProtKB-SubCell"/>
</dbReference>
<dbReference type="GO" id="GO:0005524">
    <property type="term" value="F:ATP binding"/>
    <property type="evidence" value="ECO:0007669"/>
    <property type="project" value="UniProtKB-KW"/>
</dbReference>
<dbReference type="GO" id="GO:0016887">
    <property type="term" value="F:ATP hydrolysis activity"/>
    <property type="evidence" value="ECO:0007669"/>
    <property type="project" value="InterPro"/>
</dbReference>
<dbReference type="GO" id="GO:0015415">
    <property type="term" value="F:ATPase-coupled phosphate ion transmembrane transporter activity"/>
    <property type="evidence" value="ECO:0007669"/>
    <property type="project" value="UniProtKB-EC"/>
</dbReference>
<dbReference type="GO" id="GO:0035435">
    <property type="term" value="P:phosphate ion transmembrane transport"/>
    <property type="evidence" value="ECO:0007669"/>
    <property type="project" value="InterPro"/>
</dbReference>
<dbReference type="CDD" id="cd03260">
    <property type="entry name" value="ABC_PstB_phosphate_transporter"/>
    <property type="match status" value="1"/>
</dbReference>
<dbReference type="Gene3D" id="3.40.50.300">
    <property type="entry name" value="P-loop containing nucleotide triphosphate hydrolases"/>
    <property type="match status" value="1"/>
</dbReference>
<dbReference type="InterPro" id="IPR003593">
    <property type="entry name" value="AAA+_ATPase"/>
</dbReference>
<dbReference type="InterPro" id="IPR003439">
    <property type="entry name" value="ABC_transporter-like_ATP-bd"/>
</dbReference>
<dbReference type="InterPro" id="IPR017871">
    <property type="entry name" value="ABC_transporter-like_CS"/>
</dbReference>
<dbReference type="InterPro" id="IPR027417">
    <property type="entry name" value="P-loop_NTPase"/>
</dbReference>
<dbReference type="InterPro" id="IPR005670">
    <property type="entry name" value="PstB-like"/>
</dbReference>
<dbReference type="NCBIfam" id="TIGR00972">
    <property type="entry name" value="3a0107s01c2"/>
    <property type="match status" value="1"/>
</dbReference>
<dbReference type="PANTHER" id="PTHR43423">
    <property type="entry name" value="ABC TRANSPORTER I FAMILY MEMBER 17"/>
    <property type="match status" value="1"/>
</dbReference>
<dbReference type="PANTHER" id="PTHR43423:SF1">
    <property type="entry name" value="ABC TRANSPORTER I FAMILY MEMBER 17"/>
    <property type="match status" value="1"/>
</dbReference>
<dbReference type="Pfam" id="PF00005">
    <property type="entry name" value="ABC_tran"/>
    <property type="match status" value="1"/>
</dbReference>
<dbReference type="SMART" id="SM00382">
    <property type="entry name" value="AAA"/>
    <property type="match status" value="1"/>
</dbReference>
<dbReference type="SUPFAM" id="SSF52540">
    <property type="entry name" value="P-loop containing nucleoside triphosphate hydrolases"/>
    <property type="match status" value="1"/>
</dbReference>
<dbReference type="PROSITE" id="PS00211">
    <property type="entry name" value="ABC_TRANSPORTER_1"/>
    <property type="match status" value="1"/>
</dbReference>
<dbReference type="PROSITE" id="PS50893">
    <property type="entry name" value="ABC_TRANSPORTER_2"/>
    <property type="match status" value="1"/>
</dbReference>
<dbReference type="PROSITE" id="PS51238">
    <property type="entry name" value="PSTB"/>
    <property type="match status" value="1"/>
</dbReference>
<reference key="1">
    <citation type="journal article" date="2003" name="Genome Res.">
        <title>Genome sequence of an M3 strain of Streptococcus pyogenes reveals a large-scale genomic rearrangement in invasive strains and new insights into phage evolution.</title>
        <authorList>
            <person name="Nakagawa I."/>
            <person name="Kurokawa K."/>
            <person name="Yamashita A."/>
            <person name="Nakata M."/>
            <person name="Tomiyasu Y."/>
            <person name="Okahashi N."/>
            <person name="Kawabata S."/>
            <person name="Yamazaki K."/>
            <person name="Shiba T."/>
            <person name="Yasunaga T."/>
            <person name="Hayashi H."/>
            <person name="Hattori M."/>
            <person name="Hamada S."/>
        </authorList>
    </citation>
    <scope>NUCLEOTIDE SEQUENCE [LARGE SCALE GENOMIC DNA]</scope>
    <source>
        <strain>SSI-1</strain>
    </source>
</reference>
<protein>
    <recommendedName>
        <fullName evidence="1">Phosphate import ATP-binding protein PstB 1</fullName>
        <ecNumber evidence="1">7.3.2.1</ecNumber>
    </recommendedName>
    <alternativeName>
        <fullName evidence="1">ABC phosphate transporter 1</fullName>
    </alternativeName>
    <alternativeName>
        <fullName evidence="1">Phosphate-transporting ATPase 1</fullName>
    </alternativeName>
</protein>
<comment type="function">
    <text evidence="1">Part of the ABC transporter complex PstSACB involved in phosphate import. Responsible for energy coupling to the transport system.</text>
</comment>
<comment type="catalytic activity">
    <reaction evidence="1">
        <text>phosphate(out) + ATP + H2O = ADP + 2 phosphate(in) + H(+)</text>
        <dbReference type="Rhea" id="RHEA:24440"/>
        <dbReference type="ChEBI" id="CHEBI:15377"/>
        <dbReference type="ChEBI" id="CHEBI:15378"/>
        <dbReference type="ChEBI" id="CHEBI:30616"/>
        <dbReference type="ChEBI" id="CHEBI:43474"/>
        <dbReference type="ChEBI" id="CHEBI:456216"/>
        <dbReference type="EC" id="7.3.2.1"/>
    </reaction>
</comment>
<comment type="subunit">
    <text evidence="1">The complex is composed of two ATP-binding proteins (PstB), two transmembrane proteins (PstC and PstA) and a solute-binding protein (PstS).</text>
</comment>
<comment type="subcellular location">
    <subcellularLocation>
        <location evidence="1">Cell membrane</location>
        <topology evidence="1">Peripheral membrane protein</topology>
    </subcellularLocation>
</comment>
<comment type="similarity">
    <text evidence="1">Belongs to the ABC transporter superfamily. Phosphate importer (TC 3.A.1.7) family.</text>
</comment>
<comment type="sequence caution" evidence="2">
    <conflict type="erroneous initiation">
        <sequence resource="EMBL-CDS" id="BAC64172"/>
    </conflict>
</comment>
<organism>
    <name type="scientific">Streptococcus pyogenes serotype M3 (strain SSI-1)</name>
    <dbReference type="NCBI Taxonomy" id="193567"/>
    <lineage>
        <taxon>Bacteria</taxon>
        <taxon>Bacillati</taxon>
        <taxon>Bacillota</taxon>
        <taxon>Bacilli</taxon>
        <taxon>Lactobacillales</taxon>
        <taxon>Streptococcaceae</taxon>
        <taxon>Streptococcus</taxon>
    </lineage>
</organism>
<sequence length="252" mass="28080">MTEPILQIRDLSVYYNQKKTLKDVSLDLYPNEITALIGPSGSGKSTLLRSINRMNDLNPEVTITGSIVYNGHNIYSPRTDTVDLRKEIGMVFQQPNPFPMSIYENVVYGLRLKGIRDKSILDHAVESSLKGASIWNEVKDRLHDSAVGLSGGQQQRVCIARVLATSPRIILLDEPTSALDPISAGKIEETLLLLKKDYTLAIVTRSMQQASRLSDRTGFFLEGDLLECGPTKAMFMNPKRKETEDYISGKFG</sequence>
<evidence type="ECO:0000255" key="1">
    <source>
        <dbReference type="HAMAP-Rule" id="MF_01702"/>
    </source>
</evidence>
<evidence type="ECO:0000305" key="2"/>
<keyword id="KW-0067">ATP-binding</keyword>
<keyword id="KW-1003">Cell membrane</keyword>
<keyword id="KW-0472">Membrane</keyword>
<keyword id="KW-0547">Nucleotide-binding</keyword>
<keyword id="KW-0592">Phosphate transport</keyword>
<keyword id="KW-1278">Translocase</keyword>
<keyword id="KW-0813">Transport</keyword>